<gene>
    <name evidence="10" type="primary">Peds1</name>
    <name evidence="5" type="synonym">Peds</name>
    <name evidence="10" type="synonym">Tmem189</name>
</gene>
<keyword id="KW-0256">Endoplasmic reticulum</keyword>
<keyword id="KW-0276">Fatty acid metabolism</keyword>
<keyword id="KW-0443">Lipid metabolism</keyword>
<keyword id="KW-0472">Membrane</keyword>
<keyword id="KW-0560">Oxidoreductase</keyword>
<keyword id="KW-1185">Reference proteome</keyword>
<keyword id="KW-0812">Transmembrane</keyword>
<keyword id="KW-1133">Transmembrane helix</keyword>
<protein>
    <recommendedName>
        <fullName evidence="10">Plasmanylethanolamine desaturase 1</fullName>
        <ecNumber evidence="4">1.14.19.77</ecNumber>
    </recommendedName>
    <alternativeName>
        <fullName evidence="10">Transmembrane protein 189</fullName>
    </alternativeName>
</protein>
<organism>
    <name type="scientific">Mus musculus</name>
    <name type="common">Mouse</name>
    <dbReference type="NCBI Taxonomy" id="10090"/>
    <lineage>
        <taxon>Eukaryota</taxon>
        <taxon>Metazoa</taxon>
        <taxon>Chordata</taxon>
        <taxon>Craniata</taxon>
        <taxon>Vertebrata</taxon>
        <taxon>Euteleostomi</taxon>
        <taxon>Mammalia</taxon>
        <taxon>Eutheria</taxon>
        <taxon>Euarchontoglires</taxon>
        <taxon>Glires</taxon>
        <taxon>Rodentia</taxon>
        <taxon>Myomorpha</taxon>
        <taxon>Muroidea</taxon>
        <taxon>Muridae</taxon>
        <taxon>Murinae</taxon>
        <taxon>Mus</taxon>
        <taxon>Mus</taxon>
    </lineage>
</organism>
<proteinExistence type="evidence at protein level"/>
<evidence type="ECO:0000250" key="1">
    <source>
        <dbReference type="UniProtKB" id="A5PLL7"/>
    </source>
</evidence>
<evidence type="ECO:0000255" key="2"/>
<evidence type="ECO:0000256" key="3">
    <source>
        <dbReference type="SAM" id="MobiDB-lite"/>
    </source>
</evidence>
<evidence type="ECO:0000269" key="4">
    <source>
    </source>
</evidence>
<evidence type="ECO:0000303" key="5">
    <source>
    </source>
</evidence>
<evidence type="ECO:0000305" key="6"/>
<evidence type="ECO:0000312" key="7">
    <source>
        <dbReference type="EMBL" id="AAH02270.1"/>
    </source>
</evidence>
<evidence type="ECO:0000312" key="8">
    <source>
        <dbReference type="EMBL" id="BAC40204.1"/>
    </source>
</evidence>
<evidence type="ECO:0000312" key="9">
    <source>
        <dbReference type="EMBL" id="BAE30306.1"/>
    </source>
</evidence>
<evidence type="ECO:0000312" key="10">
    <source>
        <dbReference type="MGI" id="MGI:2142624"/>
    </source>
</evidence>
<feature type="chain" id="PRO_0000319994" description="Plasmanylethanolamine desaturase 1">
    <location>
        <begin position="1"/>
        <end position="271"/>
    </location>
</feature>
<feature type="transmembrane region" description="Helical" evidence="2">
    <location>
        <begin position="48"/>
        <end position="68"/>
    </location>
</feature>
<feature type="transmembrane region" description="Helical" evidence="2">
    <location>
        <begin position="75"/>
        <end position="95"/>
    </location>
</feature>
<feature type="transmembrane region" description="Helical" evidence="2">
    <location>
        <begin position="166"/>
        <end position="186"/>
    </location>
</feature>
<feature type="region of interest" description="Disordered" evidence="3">
    <location>
        <begin position="1"/>
        <end position="25"/>
    </location>
</feature>
<feature type="short sequence motif" description="Histidine box-1" evidence="1">
    <location>
        <begin position="187"/>
        <end position="191"/>
    </location>
</feature>
<feature type="short sequence motif" description="Histidine box-2" evidence="1">
    <location>
        <begin position="214"/>
        <end position="218"/>
    </location>
</feature>
<feature type="site" description="Essential for catalytic activity" evidence="4">
    <location>
        <position position="96"/>
    </location>
</feature>
<feature type="site" description="Essential for catalytic activity" evidence="4">
    <location>
        <position position="121"/>
    </location>
</feature>
<feature type="site" description="Essential for catalytic activity" evidence="4">
    <location>
        <position position="122"/>
    </location>
</feature>
<feature type="site" description="Essential for catalytic activity" evidence="4">
    <location>
        <position position="187"/>
    </location>
</feature>
<feature type="site" description="Essential for catalytic activity" evidence="4">
    <location>
        <position position="191"/>
    </location>
</feature>
<feature type="site" description="Essential for catalytic activity" evidence="4">
    <location>
        <position position="215"/>
    </location>
</feature>
<feature type="site" description="Essential for catalytic activity" evidence="4">
    <location>
        <position position="218"/>
    </location>
</feature>
<feature type="site" description="Essential for catalytic activity" evidence="4">
    <location>
        <position position="219"/>
    </location>
</feature>
<feature type="mutagenesis site" description="Loss of plasmanylethanolamine desaturase activity. Does not affect endoplasmic reticulum membrane localization." evidence="4">
    <original>H</original>
    <variation>A</variation>
    <location>
        <position position="96"/>
    </location>
</feature>
<feature type="mutagenesis site" description="Loss of plasmanylethanolamine desaturase activity. Does not affect endoplasmic reticulum membrane localization." evidence="4">
    <original>H</original>
    <variation>A</variation>
    <location>
        <position position="121"/>
    </location>
</feature>
<feature type="mutagenesis site" description="Loss of plasmanylethanolamine desaturase activity. Does not affect endoplasmic reticulum membrane localization." evidence="4">
    <original>H</original>
    <variation>A</variation>
    <location>
        <position position="122"/>
    </location>
</feature>
<feature type="mutagenesis site" description="Strongly reduces plasmanylethanolamine desaturase activity. Does not affect endoplasmic reticulum membrane localization." evidence="4">
    <original>H</original>
    <variation>A</variation>
    <location>
        <position position="131"/>
    </location>
</feature>
<feature type="mutagenesis site" description="Loss of plasmanylethanolamine desaturase activity. Does not affect endoplasmic reticulum membrane localization." evidence="4">
    <original>H</original>
    <variation>A</variation>
    <location>
        <position position="187"/>
    </location>
</feature>
<feature type="mutagenesis site" description="Loss of plasmanylethanolamine desaturase activity. Does not affect endoplasmic reticulum membrane localization." evidence="4">
    <original>H</original>
    <variation>A</variation>
    <location>
        <position position="191"/>
    </location>
</feature>
<feature type="mutagenesis site" description="Loss of plasmanylethanolamine desaturase activity. Does not affect endoplasmic reticulum membrane localization." evidence="4">
    <original>H</original>
    <variation>A</variation>
    <location>
        <position position="215"/>
    </location>
</feature>
<feature type="mutagenesis site" description="Loss of plasmanylethanolamine desaturase activity. Does not affect endoplasmic reticulum membrane localization." evidence="4">
    <original>H</original>
    <variation>A</variation>
    <location>
        <position position="218"/>
    </location>
</feature>
<feature type="mutagenesis site" description="Loss of plasmanylethanolamine desaturase activity. Does not affect endoplasmic reticulum membrane localization." evidence="4">
    <original>H</original>
    <variation>A</variation>
    <location>
        <position position="219"/>
    </location>
</feature>
<dbReference type="EC" id="1.14.19.77" evidence="4"/>
<dbReference type="EMBL" id="AK088196">
    <property type="protein sequence ID" value="BAC40204.1"/>
    <property type="molecule type" value="mRNA"/>
</dbReference>
<dbReference type="EMBL" id="AK151326">
    <property type="protein sequence ID" value="BAE30306.1"/>
    <property type="molecule type" value="mRNA"/>
</dbReference>
<dbReference type="EMBL" id="AL589870">
    <property type="status" value="NOT_ANNOTATED_CDS"/>
    <property type="molecule type" value="Genomic_DNA"/>
</dbReference>
<dbReference type="EMBL" id="CR626861">
    <property type="status" value="NOT_ANNOTATED_CDS"/>
    <property type="molecule type" value="Genomic_DNA"/>
</dbReference>
<dbReference type="EMBL" id="BC002270">
    <property type="protein sequence ID" value="AAH02270.1"/>
    <property type="molecule type" value="mRNA"/>
</dbReference>
<dbReference type="CCDS" id="CCDS17104.1"/>
<dbReference type="RefSeq" id="NP_663513.1">
    <property type="nucleotide sequence ID" value="NM_145538.2"/>
</dbReference>
<dbReference type="FunCoup" id="Q99LQ7">
    <property type="interactions" value="1220"/>
</dbReference>
<dbReference type="STRING" id="10090.ENSMUSP00000006587"/>
<dbReference type="PhosphoSitePlus" id="Q99LQ7"/>
<dbReference type="PaxDb" id="10090-ENSMUSP00000006587"/>
<dbReference type="PeptideAtlas" id="Q99LQ7"/>
<dbReference type="ProteomicsDB" id="259467"/>
<dbReference type="Pumba" id="Q99LQ7"/>
<dbReference type="Antibodypedia" id="35022">
    <property type="antibodies" value="39 antibodies from 16 providers"/>
</dbReference>
<dbReference type="DNASU" id="407243"/>
<dbReference type="Ensembl" id="ENSMUST00000006587.7">
    <property type="protein sequence ID" value="ENSMUSP00000006587.7"/>
    <property type="gene ID" value="ENSMUSG00000090213.2"/>
</dbReference>
<dbReference type="GeneID" id="407243"/>
<dbReference type="KEGG" id="mmu:407243"/>
<dbReference type="UCSC" id="uc008oad.1">
    <property type="organism name" value="mouse"/>
</dbReference>
<dbReference type="AGR" id="MGI:2142624"/>
<dbReference type="CTD" id="387521"/>
<dbReference type="MGI" id="MGI:2142624">
    <property type="gene designation" value="Peds1"/>
</dbReference>
<dbReference type="VEuPathDB" id="HostDB:ENSMUSG00000090213"/>
<dbReference type="eggNOG" id="KOG3011">
    <property type="taxonomic scope" value="Eukaryota"/>
</dbReference>
<dbReference type="GeneTree" id="ENSGT00940000162354"/>
<dbReference type="HOGENOM" id="CLU_065233_1_1_1"/>
<dbReference type="InParanoid" id="Q99LQ7"/>
<dbReference type="OMA" id="CITNGWL"/>
<dbReference type="OrthoDB" id="5103at2759"/>
<dbReference type="PhylomeDB" id="Q99LQ7"/>
<dbReference type="TreeFam" id="TF106147"/>
<dbReference type="UniPathway" id="UPA00199"/>
<dbReference type="BioGRID-ORCS" id="407243">
    <property type="hits" value="8 hits in 76 CRISPR screens"/>
</dbReference>
<dbReference type="ChiTaRS" id="Tmem189">
    <property type="organism name" value="mouse"/>
</dbReference>
<dbReference type="PRO" id="PR:Q99LQ7"/>
<dbReference type="Proteomes" id="UP000000589">
    <property type="component" value="Chromosome 2"/>
</dbReference>
<dbReference type="RNAct" id="Q99LQ7">
    <property type="molecule type" value="protein"/>
</dbReference>
<dbReference type="Bgee" id="ENSMUSG00000090213">
    <property type="expression patterns" value="Expressed in right kidney and 76 other cell types or tissues"/>
</dbReference>
<dbReference type="GO" id="GO:0005789">
    <property type="term" value="C:endoplasmic reticulum membrane"/>
    <property type="evidence" value="ECO:0000314"/>
    <property type="project" value="UniProtKB"/>
</dbReference>
<dbReference type="GO" id="GO:0050207">
    <property type="term" value="F:plasmanylethanolamine desaturase activity"/>
    <property type="evidence" value="ECO:0000314"/>
    <property type="project" value="UniProtKB"/>
</dbReference>
<dbReference type="GO" id="GO:0008611">
    <property type="term" value="P:ether lipid biosynthetic process"/>
    <property type="evidence" value="ECO:0000314"/>
    <property type="project" value="UniProtKB"/>
</dbReference>
<dbReference type="GO" id="GO:0006631">
    <property type="term" value="P:fatty acid metabolic process"/>
    <property type="evidence" value="ECO:0007669"/>
    <property type="project" value="UniProtKB-UniPathway"/>
</dbReference>
<dbReference type="InterPro" id="IPR019547">
    <property type="entry name" value="Lipid_desat"/>
</dbReference>
<dbReference type="InterPro" id="IPR052601">
    <property type="entry name" value="Plasmalogen_desaturase"/>
</dbReference>
<dbReference type="PANTHER" id="PTHR48177:SF1">
    <property type="entry name" value="PLASMANYLETHANOLAMINE DESATURASE 1"/>
    <property type="match status" value="1"/>
</dbReference>
<dbReference type="PANTHER" id="PTHR48177">
    <property type="entry name" value="TRANSMEMBRANE PROTEIN 189"/>
    <property type="match status" value="1"/>
</dbReference>
<dbReference type="Pfam" id="PF10520">
    <property type="entry name" value="Lipid_desat"/>
    <property type="match status" value="1"/>
</dbReference>
<reference evidence="8" key="1">
    <citation type="journal article" date="2005" name="Science">
        <title>The transcriptional landscape of the mammalian genome.</title>
        <authorList>
            <person name="Carninci P."/>
            <person name="Kasukawa T."/>
            <person name="Katayama S."/>
            <person name="Gough J."/>
            <person name="Frith M.C."/>
            <person name="Maeda N."/>
            <person name="Oyama R."/>
            <person name="Ravasi T."/>
            <person name="Lenhard B."/>
            <person name="Wells C."/>
            <person name="Kodzius R."/>
            <person name="Shimokawa K."/>
            <person name="Bajic V.B."/>
            <person name="Brenner S.E."/>
            <person name="Batalov S."/>
            <person name="Forrest A.R."/>
            <person name="Zavolan M."/>
            <person name="Davis M.J."/>
            <person name="Wilming L.G."/>
            <person name="Aidinis V."/>
            <person name="Allen J.E."/>
            <person name="Ambesi-Impiombato A."/>
            <person name="Apweiler R."/>
            <person name="Aturaliya R.N."/>
            <person name="Bailey T.L."/>
            <person name="Bansal M."/>
            <person name="Baxter L."/>
            <person name="Beisel K.W."/>
            <person name="Bersano T."/>
            <person name="Bono H."/>
            <person name="Chalk A.M."/>
            <person name="Chiu K.P."/>
            <person name="Choudhary V."/>
            <person name="Christoffels A."/>
            <person name="Clutterbuck D.R."/>
            <person name="Crowe M.L."/>
            <person name="Dalla E."/>
            <person name="Dalrymple B.P."/>
            <person name="de Bono B."/>
            <person name="Della Gatta G."/>
            <person name="di Bernardo D."/>
            <person name="Down T."/>
            <person name="Engstrom P."/>
            <person name="Fagiolini M."/>
            <person name="Faulkner G."/>
            <person name="Fletcher C.F."/>
            <person name="Fukushima T."/>
            <person name="Furuno M."/>
            <person name="Futaki S."/>
            <person name="Gariboldi M."/>
            <person name="Georgii-Hemming P."/>
            <person name="Gingeras T.R."/>
            <person name="Gojobori T."/>
            <person name="Green R.E."/>
            <person name="Gustincich S."/>
            <person name="Harbers M."/>
            <person name="Hayashi Y."/>
            <person name="Hensch T.K."/>
            <person name="Hirokawa N."/>
            <person name="Hill D."/>
            <person name="Huminiecki L."/>
            <person name="Iacono M."/>
            <person name="Ikeo K."/>
            <person name="Iwama A."/>
            <person name="Ishikawa T."/>
            <person name="Jakt M."/>
            <person name="Kanapin A."/>
            <person name="Katoh M."/>
            <person name="Kawasawa Y."/>
            <person name="Kelso J."/>
            <person name="Kitamura H."/>
            <person name="Kitano H."/>
            <person name="Kollias G."/>
            <person name="Krishnan S.P."/>
            <person name="Kruger A."/>
            <person name="Kummerfeld S.K."/>
            <person name="Kurochkin I.V."/>
            <person name="Lareau L.F."/>
            <person name="Lazarevic D."/>
            <person name="Lipovich L."/>
            <person name="Liu J."/>
            <person name="Liuni S."/>
            <person name="McWilliam S."/>
            <person name="Madan Babu M."/>
            <person name="Madera M."/>
            <person name="Marchionni L."/>
            <person name="Matsuda H."/>
            <person name="Matsuzawa S."/>
            <person name="Miki H."/>
            <person name="Mignone F."/>
            <person name="Miyake S."/>
            <person name="Morris K."/>
            <person name="Mottagui-Tabar S."/>
            <person name="Mulder N."/>
            <person name="Nakano N."/>
            <person name="Nakauchi H."/>
            <person name="Ng P."/>
            <person name="Nilsson R."/>
            <person name="Nishiguchi S."/>
            <person name="Nishikawa S."/>
            <person name="Nori F."/>
            <person name="Ohara O."/>
            <person name="Okazaki Y."/>
            <person name="Orlando V."/>
            <person name="Pang K.C."/>
            <person name="Pavan W.J."/>
            <person name="Pavesi G."/>
            <person name="Pesole G."/>
            <person name="Petrovsky N."/>
            <person name="Piazza S."/>
            <person name="Reed J."/>
            <person name="Reid J.F."/>
            <person name="Ring B.Z."/>
            <person name="Ringwald M."/>
            <person name="Rost B."/>
            <person name="Ruan Y."/>
            <person name="Salzberg S.L."/>
            <person name="Sandelin A."/>
            <person name="Schneider C."/>
            <person name="Schoenbach C."/>
            <person name="Sekiguchi K."/>
            <person name="Semple C.A."/>
            <person name="Seno S."/>
            <person name="Sessa L."/>
            <person name="Sheng Y."/>
            <person name="Shibata Y."/>
            <person name="Shimada H."/>
            <person name="Shimada K."/>
            <person name="Silva D."/>
            <person name="Sinclair B."/>
            <person name="Sperling S."/>
            <person name="Stupka E."/>
            <person name="Sugiura K."/>
            <person name="Sultana R."/>
            <person name="Takenaka Y."/>
            <person name="Taki K."/>
            <person name="Tammoja K."/>
            <person name="Tan S.L."/>
            <person name="Tang S."/>
            <person name="Taylor M.S."/>
            <person name="Tegner J."/>
            <person name="Teichmann S.A."/>
            <person name="Ueda H.R."/>
            <person name="van Nimwegen E."/>
            <person name="Verardo R."/>
            <person name="Wei C.L."/>
            <person name="Yagi K."/>
            <person name="Yamanishi H."/>
            <person name="Zabarovsky E."/>
            <person name="Zhu S."/>
            <person name="Zimmer A."/>
            <person name="Hide W."/>
            <person name="Bult C."/>
            <person name="Grimmond S.M."/>
            <person name="Teasdale R.D."/>
            <person name="Liu E.T."/>
            <person name="Brusic V."/>
            <person name="Quackenbush J."/>
            <person name="Wahlestedt C."/>
            <person name="Mattick J.S."/>
            <person name="Hume D.A."/>
            <person name="Kai C."/>
            <person name="Sasaki D."/>
            <person name="Tomaru Y."/>
            <person name="Fukuda S."/>
            <person name="Kanamori-Katayama M."/>
            <person name="Suzuki M."/>
            <person name="Aoki J."/>
            <person name="Arakawa T."/>
            <person name="Iida J."/>
            <person name="Imamura K."/>
            <person name="Itoh M."/>
            <person name="Kato T."/>
            <person name="Kawaji H."/>
            <person name="Kawagashira N."/>
            <person name="Kawashima T."/>
            <person name="Kojima M."/>
            <person name="Kondo S."/>
            <person name="Konno H."/>
            <person name="Nakano K."/>
            <person name="Ninomiya N."/>
            <person name="Nishio T."/>
            <person name="Okada M."/>
            <person name="Plessy C."/>
            <person name="Shibata K."/>
            <person name="Shiraki T."/>
            <person name="Suzuki S."/>
            <person name="Tagami M."/>
            <person name="Waki K."/>
            <person name="Watahiki A."/>
            <person name="Okamura-Oho Y."/>
            <person name="Suzuki H."/>
            <person name="Kawai J."/>
            <person name="Hayashizaki Y."/>
        </authorList>
    </citation>
    <scope>NUCLEOTIDE SEQUENCE [LARGE SCALE MRNA]</scope>
    <source>
        <strain evidence="9">C57BL/6J</strain>
        <strain evidence="8">NOD</strain>
        <tissue evidence="9">Bone marrow</tissue>
        <tissue evidence="8">Thymus</tissue>
    </source>
</reference>
<reference key="2">
    <citation type="journal article" date="2009" name="PLoS Biol.">
        <title>Lineage-specific biology revealed by a finished genome assembly of the mouse.</title>
        <authorList>
            <person name="Church D.M."/>
            <person name="Goodstadt L."/>
            <person name="Hillier L.W."/>
            <person name="Zody M.C."/>
            <person name="Goldstein S."/>
            <person name="She X."/>
            <person name="Bult C.J."/>
            <person name="Agarwala R."/>
            <person name="Cherry J.L."/>
            <person name="DiCuccio M."/>
            <person name="Hlavina W."/>
            <person name="Kapustin Y."/>
            <person name="Meric P."/>
            <person name="Maglott D."/>
            <person name="Birtle Z."/>
            <person name="Marques A.C."/>
            <person name="Graves T."/>
            <person name="Zhou S."/>
            <person name="Teague B."/>
            <person name="Potamousis K."/>
            <person name="Churas C."/>
            <person name="Place M."/>
            <person name="Herschleb J."/>
            <person name="Runnheim R."/>
            <person name="Forrest D."/>
            <person name="Amos-Landgraf J."/>
            <person name="Schwartz D.C."/>
            <person name="Cheng Z."/>
            <person name="Lindblad-Toh K."/>
            <person name="Eichler E.E."/>
            <person name="Ponting C.P."/>
        </authorList>
    </citation>
    <scope>NUCLEOTIDE SEQUENCE [LARGE SCALE GENOMIC DNA]</scope>
    <source>
        <strain>C57BL/6J</strain>
    </source>
</reference>
<reference evidence="7" key="3">
    <citation type="journal article" date="2004" name="Genome Res.">
        <title>The status, quality, and expansion of the NIH full-length cDNA project: the Mammalian Gene Collection (MGC).</title>
        <authorList>
            <consortium name="The MGC Project Team"/>
        </authorList>
    </citation>
    <scope>NUCLEOTIDE SEQUENCE [LARGE SCALE MRNA]</scope>
    <source>
        <tissue evidence="7">Mammary tumor</tissue>
    </source>
</reference>
<reference key="4">
    <citation type="journal article" date="2010" name="Cell">
        <title>A tissue-specific atlas of mouse protein phosphorylation and expression.</title>
        <authorList>
            <person name="Huttlin E.L."/>
            <person name="Jedrychowski M.P."/>
            <person name="Elias J.E."/>
            <person name="Goswami T."/>
            <person name="Rad R."/>
            <person name="Beausoleil S.A."/>
            <person name="Villen J."/>
            <person name="Haas W."/>
            <person name="Sowa M.E."/>
            <person name="Gygi S.P."/>
        </authorList>
    </citation>
    <scope>IDENTIFICATION BY MASS SPECTROMETRY [LARGE SCALE ANALYSIS]</scope>
    <source>
        <tissue>Brain</tissue>
        <tissue>Spleen</tissue>
    </source>
</reference>
<reference key="5">
    <citation type="journal article" date="2020" name="Proc. Natl. Acad. Sci. U.S.A.">
        <title>The TMEM189 gene encodes plasmanylethanolamine desaturase which introduces the characteristic vinyl ether double bond into plasmalogens.</title>
        <authorList>
            <person name="Werner E.R."/>
            <person name="Keller M.A."/>
            <person name="Sailer S."/>
            <person name="Lackner K."/>
            <person name="Koch J."/>
            <person name="Hermann M."/>
            <person name="Coassin S."/>
            <person name="Golderer G."/>
            <person name="Werner-Felmayer G."/>
            <person name="Zoeller R.A."/>
            <person name="Hulo N."/>
            <person name="Berger J."/>
            <person name="Watschinger K."/>
        </authorList>
    </citation>
    <scope>FUNCTION</scope>
    <scope>CATALYTIC ACTIVITY</scope>
    <scope>MUTAGENESIS OF HIS-96; HIS-121; HIS-122; HIS-131; HIS-187; HIS-191; HIS-215; HIS-218 AND HIS-219</scope>
    <scope>DISRUPTION PHENOTYPE</scope>
    <scope>SUBCELLULAR LOCATION</scope>
    <scope>PATHWAY</scope>
</reference>
<accession>Q99LQ7</accession>
<sequence length="271" mass="31134">MAGAEDAPGRQPELDEDETAEGRRWGAQHAGARELAALYSPGKRFQEWCSVILCFSLIAHNLVHLLLLARWEHTPLVILGVVAGALVADFLSGLVHWGADTWGSVDLPIVGKAFIRPFREHHIDPTAITRHDFIETNGDNCLVTLLPLLNMAYKFRTQSPETLEQLYPWECFVFCLTIFGTFTNQIHKWSHTYLGLPYWVTVLQDWHVILPRKHHRIHHVAPHETYFCITTGWLNYPLEVIGFWRRLEDLIQGLTGEKPRADDMKWAQKIK</sequence>
<comment type="function">
    <text evidence="4">Plasmanylethanolamine desaturase involved in plasmalogen biogenesis in the endoplasmic reticulum membrane. Plasmalogens are glycerophospholipids with a hydrocarbon chain linked by a vinyl ether bond at the glycerol sn-1 position, and are involved in antioxidative and signaling mechanisms.</text>
</comment>
<comment type="catalytic activity">
    <reaction evidence="4">
        <text>a 1-(1,2-saturated alkyl)-2-acyl-sn-glycero-3-phosphoethanolamine + 2 Fe(II)-[cytochrome b5] + O2 + 2 H(+) = a 1-O-(1Z-alkenyl)-2-acyl-sn-glycero-3-phosphoethanolamine + 2 Fe(III)-[cytochrome b5] + 2 H2O</text>
        <dbReference type="Rhea" id="RHEA:22956"/>
        <dbReference type="Rhea" id="RHEA-COMP:10438"/>
        <dbReference type="Rhea" id="RHEA-COMP:10439"/>
        <dbReference type="ChEBI" id="CHEBI:15377"/>
        <dbReference type="ChEBI" id="CHEBI:15378"/>
        <dbReference type="ChEBI" id="CHEBI:15379"/>
        <dbReference type="ChEBI" id="CHEBI:29033"/>
        <dbReference type="ChEBI" id="CHEBI:29034"/>
        <dbReference type="ChEBI" id="CHEBI:75028"/>
        <dbReference type="ChEBI" id="CHEBI:77290"/>
        <dbReference type="EC" id="1.14.19.77"/>
    </reaction>
    <physiologicalReaction direction="left-to-right" evidence="1">
        <dbReference type="Rhea" id="RHEA:22957"/>
    </physiologicalReaction>
</comment>
<comment type="catalytic activity">
    <reaction evidence="1">
        <text>a 1-O-hexadecyl-2-acyl-sn-glycero-3-phosphoethanolamine + 2 Fe(II)-[cytochrome b5] + O2 + 2 H(+) = a 1-O-(1Z-hexadecenyl)-2-acyl-sn-glycero-3-phosphoethanolamine + 2 Fe(III)-[cytochrome b5] + 2 H2O</text>
        <dbReference type="Rhea" id="RHEA:61960"/>
        <dbReference type="Rhea" id="RHEA-COMP:10438"/>
        <dbReference type="Rhea" id="RHEA-COMP:10439"/>
        <dbReference type="ChEBI" id="CHEBI:15377"/>
        <dbReference type="ChEBI" id="CHEBI:15378"/>
        <dbReference type="ChEBI" id="CHEBI:15379"/>
        <dbReference type="ChEBI" id="CHEBI:29033"/>
        <dbReference type="ChEBI" id="CHEBI:29034"/>
        <dbReference type="ChEBI" id="CHEBI:145181"/>
        <dbReference type="ChEBI" id="CHEBI:145186"/>
    </reaction>
    <physiologicalReaction direction="left-to-right" evidence="1">
        <dbReference type="Rhea" id="RHEA:61961"/>
    </physiologicalReaction>
</comment>
<comment type="catalytic activity">
    <reaction evidence="1">
        <text>a 1-O-octadecyl-2-acyl-sn-glycero-3-phosphoethanolamine + 2 Fe(II)-[cytochrome b5] + O2 + 2 H(+) = a 1-O-(1Z-octadecenyl)-2-acyl-sn-glycero-3-phosphoethanolamine + 2 Fe(III)-[cytochrome b5] + 2 H2O</text>
        <dbReference type="Rhea" id="RHEA:61964"/>
        <dbReference type="Rhea" id="RHEA-COMP:10438"/>
        <dbReference type="Rhea" id="RHEA-COMP:10439"/>
        <dbReference type="ChEBI" id="CHEBI:15377"/>
        <dbReference type="ChEBI" id="CHEBI:15378"/>
        <dbReference type="ChEBI" id="CHEBI:15379"/>
        <dbReference type="ChEBI" id="CHEBI:29033"/>
        <dbReference type="ChEBI" id="CHEBI:29034"/>
        <dbReference type="ChEBI" id="CHEBI:145182"/>
        <dbReference type="ChEBI" id="CHEBI:145187"/>
    </reaction>
    <physiologicalReaction direction="left-to-right" evidence="1">
        <dbReference type="Rhea" id="RHEA:61965"/>
    </physiologicalReaction>
</comment>
<comment type="catalytic activity">
    <reaction evidence="1">
        <text>a 1-O-(9Z-octadecenyl)-2-acyl-sn-glycero-3-phosphoethanolamine + 2 Fe(II)-[cytochrome b5] + O2 + 2 H(+) = a 1-O-(1Z,9Z-octadecadienyl)-2-acyl-sn-glycero-3-phosphoethanolamine + 2 Fe(III)-[cytochrome b5] + 2 H2O</text>
        <dbReference type="Rhea" id="RHEA:61968"/>
        <dbReference type="Rhea" id="RHEA-COMP:10438"/>
        <dbReference type="Rhea" id="RHEA-COMP:10439"/>
        <dbReference type="ChEBI" id="CHEBI:15377"/>
        <dbReference type="ChEBI" id="CHEBI:15378"/>
        <dbReference type="ChEBI" id="CHEBI:15379"/>
        <dbReference type="ChEBI" id="CHEBI:29033"/>
        <dbReference type="ChEBI" id="CHEBI:29034"/>
        <dbReference type="ChEBI" id="CHEBI:145183"/>
        <dbReference type="ChEBI" id="CHEBI:145188"/>
    </reaction>
    <physiologicalReaction direction="left-to-right" evidence="1">
        <dbReference type="Rhea" id="RHEA:61969"/>
    </physiologicalReaction>
</comment>
<comment type="pathway">
    <text evidence="4">Lipid metabolism; fatty acid metabolism.</text>
</comment>
<comment type="subcellular location">
    <subcellularLocation>
        <location evidence="4">Endoplasmic reticulum membrane</location>
        <topology evidence="2">Multi-pass membrane protein</topology>
    </subcellularLocation>
</comment>
<comment type="domain">
    <text evidence="4">Histidine box-1 and -2 together with other histidine residues are essential for catalytic activity.</text>
</comment>
<comment type="disruption phenotype">
    <text evidence="4">Body weight is reduced in homozygous deficient male and female. Deficient mice lack plasmanylethanolamine desaturase activity and have dramatically lowered plasmalogen levels in their tissues.</text>
</comment>
<comment type="similarity">
    <text evidence="6">Belongs to the fatty acid desaturase CarF family.</text>
</comment>
<name>PEDS1_MOUSE</name>